<comment type="function">
    <text evidence="1">This protein is one of the two subunits of integration host factor, a specific DNA-binding protein that functions in genetic recombination as well as in transcriptional and translational control.</text>
</comment>
<comment type="subunit">
    <text evidence="1">Heterodimer of an alpha and a beta chain.</text>
</comment>
<comment type="similarity">
    <text evidence="1">Belongs to the bacterial histone-like protein family.</text>
</comment>
<proteinExistence type="inferred from homology"/>
<sequence>MTKSELIEKLATRQSQLSAKEVEGAIKEMLEQMATTLESGDRIEIRGFGSFSLHYRAPRTGRNPKTGSSVELEGKYVPHFKPGKELRERVDAVNV</sequence>
<accession>A0KWP0</accession>
<dbReference type="EMBL" id="CP000469">
    <property type="protein sequence ID" value="ABK48209.1"/>
    <property type="molecule type" value="Genomic_DNA"/>
</dbReference>
<dbReference type="RefSeq" id="WP_011072380.1">
    <property type="nucleotide sequence ID" value="NC_008577.1"/>
</dbReference>
<dbReference type="SMR" id="A0KWP0"/>
<dbReference type="STRING" id="94122.Shewana3_1978"/>
<dbReference type="GeneID" id="94727933"/>
<dbReference type="KEGG" id="shn:Shewana3_1978"/>
<dbReference type="eggNOG" id="COG0776">
    <property type="taxonomic scope" value="Bacteria"/>
</dbReference>
<dbReference type="HOGENOM" id="CLU_105066_2_0_6"/>
<dbReference type="OrthoDB" id="9804203at2"/>
<dbReference type="Proteomes" id="UP000002589">
    <property type="component" value="Chromosome"/>
</dbReference>
<dbReference type="GO" id="GO:0005694">
    <property type="term" value="C:chromosome"/>
    <property type="evidence" value="ECO:0007669"/>
    <property type="project" value="InterPro"/>
</dbReference>
<dbReference type="GO" id="GO:0005829">
    <property type="term" value="C:cytosol"/>
    <property type="evidence" value="ECO:0007669"/>
    <property type="project" value="TreeGrafter"/>
</dbReference>
<dbReference type="GO" id="GO:0003677">
    <property type="term" value="F:DNA binding"/>
    <property type="evidence" value="ECO:0007669"/>
    <property type="project" value="UniProtKB-UniRule"/>
</dbReference>
<dbReference type="GO" id="GO:0030527">
    <property type="term" value="F:structural constituent of chromatin"/>
    <property type="evidence" value="ECO:0007669"/>
    <property type="project" value="InterPro"/>
</dbReference>
<dbReference type="GO" id="GO:0006310">
    <property type="term" value="P:DNA recombination"/>
    <property type="evidence" value="ECO:0007669"/>
    <property type="project" value="UniProtKB-UniRule"/>
</dbReference>
<dbReference type="GO" id="GO:0006355">
    <property type="term" value="P:regulation of DNA-templated transcription"/>
    <property type="evidence" value="ECO:0007669"/>
    <property type="project" value="UniProtKB-UniRule"/>
</dbReference>
<dbReference type="GO" id="GO:0006417">
    <property type="term" value="P:regulation of translation"/>
    <property type="evidence" value="ECO:0007669"/>
    <property type="project" value="UniProtKB-UniRule"/>
</dbReference>
<dbReference type="CDD" id="cd13836">
    <property type="entry name" value="IHF_B"/>
    <property type="match status" value="1"/>
</dbReference>
<dbReference type="FunFam" id="4.10.520.10:FF:000003">
    <property type="entry name" value="Integration host factor subunit beta"/>
    <property type="match status" value="1"/>
</dbReference>
<dbReference type="Gene3D" id="4.10.520.10">
    <property type="entry name" value="IHF-like DNA-binding proteins"/>
    <property type="match status" value="1"/>
</dbReference>
<dbReference type="HAMAP" id="MF_00381">
    <property type="entry name" value="IHF_beta"/>
    <property type="match status" value="1"/>
</dbReference>
<dbReference type="InterPro" id="IPR000119">
    <property type="entry name" value="Hist_DNA-bd"/>
</dbReference>
<dbReference type="InterPro" id="IPR020816">
    <property type="entry name" value="Histone-like_DNA-bd_CS"/>
</dbReference>
<dbReference type="InterPro" id="IPR010992">
    <property type="entry name" value="IHF-like_DNA-bd_dom_sf"/>
</dbReference>
<dbReference type="InterPro" id="IPR005685">
    <property type="entry name" value="IHF_beta"/>
</dbReference>
<dbReference type="NCBIfam" id="TIGR00988">
    <property type="entry name" value="hip"/>
    <property type="match status" value="1"/>
</dbReference>
<dbReference type="NCBIfam" id="NF001222">
    <property type="entry name" value="PRK00199.1"/>
    <property type="match status" value="1"/>
</dbReference>
<dbReference type="PANTHER" id="PTHR33175">
    <property type="entry name" value="DNA-BINDING PROTEIN HU"/>
    <property type="match status" value="1"/>
</dbReference>
<dbReference type="PANTHER" id="PTHR33175:SF5">
    <property type="entry name" value="INTEGRATION HOST FACTOR SUBUNIT BETA"/>
    <property type="match status" value="1"/>
</dbReference>
<dbReference type="Pfam" id="PF00216">
    <property type="entry name" value="Bac_DNA_binding"/>
    <property type="match status" value="1"/>
</dbReference>
<dbReference type="PRINTS" id="PR01727">
    <property type="entry name" value="DNABINDINGHU"/>
</dbReference>
<dbReference type="SMART" id="SM00411">
    <property type="entry name" value="BHL"/>
    <property type="match status" value="1"/>
</dbReference>
<dbReference type="SUPFAM" id="SSF47729">
    <property type="entry name" value="IHF-like DNA-binding proteins"/>
    <property type="match status" value="1"/>
</dbReference>
<dbReference type="PROSITE" id="PS00045">
    <property type="entry name" value="HISTONE_LIKE"/>
    <property type="match status" value="1"/>
</dbReference>
<reference key="1">
    <citation type="submission" date="2006-09" db="EMBL/GenBank/DDBJ databases">
        <title>Complete sequence of chromosome 1 of Shewanella sp. ANA-3.</title>
        <authorList>
            <person name="Copeland A."/>
            <person name="Lucas S."/>
            <person name="Lapidus A."/>
            <person name="Barry K."/>
            <person name="Detter J.C."/>
            <person name="Glavina del Rio T."/>
            <person name="Hammon N."/>
            <person name="Israni S."/>
            <person name="Dalin E."/>
            <person name="Tice H."/>
            <person name="Pitluck S."/>
            <person name="Chertkov O."/>
            <person name="Brettin T."/>
            <person name="Bruce D."/>
            <person name="Han C."/>
            <person name="Tapia R."/>
            <person name="Gilna P."/>
            <person name="Schmutz J."/>
            <person name="Larimer F."/>
            <person name="Land M."/>
            <person name="Hauser L."/>
            <person name="Kyrpides N."/>
            <person name="Kim E."/>
            <person name="Newman D."/>
            <person name="Salticov C."/>
            <person name="Konstantinidis K."/>
            <person name="Klappenback J."/>
            <person name="Tiedje J."/>
            <person name="Richardson P."/>
        </authorList>
    </citation>
    <scope>NUCLEOTIDE SEQUENCE [LARGE SCALE GENOMIC DNA]</scope>
    <source>
        <strain>ANA-3</strain>
    </source>
</reference>
<keyword id="KW-0233">DNA recombination</keyword>
<keyword id="KW-0238">DNA-binding</keyword>
<keyword id="KW-0804">Transcription</keyword>
<keyword id="KW-0805">Transcription regulation</keyword>
<keyword id="KW-0810">Translation regulation</keyword>
<name>IHFB_SHESA</name>
<evidence type="ECO:0000255" key="1">
    <source>
        <dbReference type="HAMAP-Rule" id="MF_00381"/>
    </source>
</evidence>
<gene>
    <name evidence="1" type="primary">ihfB</name>
    <name evidence="1" type="synonym">himD</name>
    <name type="ordered locus">Shewana3_1978</name>
</gene>
<feature type="chain" id="PRO_1000060661" description="Integration host factor subunit beta">
    <location>
        <begin position="1"/>
        <end position="95"/>
    </location>
</feature>
<protein>
    <recommendedName>
        <fullName evidence="1">Integration host factor subunit beta</fullName>
        <shortName evidence="1">IHF-beta</shortName>
    </recommendedName>
</protein>
<organism>
    <name type="scientific">Shewanella sp. (strain ANA-3)</name>
    <dbReference type="NCBI Taxonomy" id="94122"/>
    <lineage>
        <taxon>Bacteria</taxon>
        <taxon>Pseudomonadati</taxon>
        <taxon>Pseudomonadota</taxon>
        <taxon>Gammaproteobacteria</taxon>
        <taxon>Alteromonadales</taxon>
        <taxon>Shewanellaceae</taxon>
        <taxon>Shewanella</taxon>
    </lineage>
</organism>